<sequence length="158" mass="17692">MRWLPFIAIFLYVYIEISIFIQVAHVLGVLLTLVLVIFTSVIGMSLVRNQGFKNFVLMQQKMAAGENPAAEMIKSVSLIIAGLLLLLPGFFTDFLGLLLLLPPVQKHLTVKLMPHLRFSRMPGGGFSAGTGGGNTFDGEYQRKDDERDRLDHKDDRQD</sequence>
<feature type="chain" id="PRO_0000087394" description="UPF0716 protein FxsA">
    <location>
        <begin position="1"/>
        <end position="158"/>
    </location>
</feature>
<feature type="topological domain" description="Cytoplasmic" evidence="1">
    <location>
        <begin position="1"/>
        <end position="16"/>
    </location>
</feature>
<feature type="transmembrane region" description="Helical" evidence="1">
    <location>
        <begin position="17"/>
        <end position="37"/>
    </location>
</feature>
<feature type="topological domain" description="Periplasmic" evidence="1">
    <location>
        <begin position="38"/>
        <end position="78"/>
    </location>
</feature>
<feature type="transmembrane region" description="Helical" evidence="1">
    <location>
        <begin position="79"/>
        <end position="99"/>
    </location>
</feature>
<feature type="topological domain" description="Cytoplasmic" evidence="1">
    <location>
        <begin position="100"/>
        <end position="158"/>
    </location>
</feature>
<feature type="region of interest" description="Disordered" evidence="2">
    <location>
        <begin position="125"/>
        <end position="158"/>
    </location>
</feature>
<feature type="compositionally biased region" description="Gly residues" evidence="2">
    <location>
        <begin position="125"/>
        <end position="135"/>
    </location>
</feature>
<feature type="compositionally biased region" description="Basic and acidic residues" evidence="2">
    <location>
        <begin position="139"/>
        <end position="158"/>
    </location>
</feature>
<gene>
    <name type="primary">fxsA</name>
    <name type="synonym">yjeG</name>
    <name type="ordered locus">b4140</name>
    <name type="ordered locus">JW4100</name>
</gene>
<name>FXSA_ECOLI</name>
<proteinExistence type="evidence at protein level"/>
<reference key="1">
    <citation type="journal article" date="1999" name="J. Mol. Biol.">
        <title>Isolation and identification of fxsA, an Escherichia coli gene that can suppress F exclusion of bacteriophage T7.</title>
        <authorList>
            <person name="Wang W.-F."/>
            <person name="Cheng X."/>
            <person name="Molineux I.J."/>
        </authorList>
    </citation>
    <scope>NUCLEOTIDE SEQUENCE [GENOMIC DNA]</scope>
    <source>
        <strain>K12</strain>
    </source>
</reference>
<reference key="2">
    <citation type="journal article" date="1995" name="Nucleic Acids Res.">
        <title>Analysis of the Escherichia coli genome VI: DNA sequence of the region from 92.8 through 100 minutes.</title>
        <authorList>
            <person name="Burland V.D."/>
            <person name="Plunkett G. III"/>
            <person name="Sofia H.J."/>
            <person name="Daniels D.L."/>
            <person name="Blattner F.R."/>
        </authorList>
    </citation>
    <scope>NUCLEOTIDE SEQUENCE [LARGE SCALE GENOMIC DNA]</scope>
    <source>
        <strain>K12 / MG1655 / ATCC 47076</strain>
    </source>
</reference>
<reference key="3">
    <citation type="journal article" date="1997" name="Science">
        <title>The complete genome sequence of Escherichia coli K-12.</title>
        <authorList>
            <person name="Blattner F.R."/>
            <person name="Plunkett G. III"/>
            <person name="Bloch C.A."/>
            <person name="Perna N.T."/>
            <person name="Burland V."/>
            <person name="Riley M."/>
            <person name="Collado-Vides J."/>
            <person name="Glasner J.D."/>
            <person name="Rode C.K."/>
            <person name="Mayhew G.F."/>
            <person name="Gregor J."/>
            <person name="Davis N.W."/>
            <person name="Kirkpatrick H.A."/>
            <person name="Goeden M.A."/>
            <person name="Rose D.J."/>
            <person name="Mau B."/>
            <person name="Shao Y."/>
        </authorList>
    </citation>
    <scope>NUCLEOTIDE SEQUENCE [LARGE SCALE GENOMIC DNA]</scope>
    <source>
        <strain>K12 / MG1655 / ATCC 47076</strain>
    </source>
</reference>
<reference key="4">
    <citation type="journal article" date="2006" name="Mol. Syst. Biol.">
        <title>Highly accurate genome sequences of Escherichia coli K-12 strains MG1655 and W3110.</title>
        <authorList>
            <person name="Hayashi K."/>
            <person name="Morooka N."/>
            <person name="Yamamoto Y."/>
            <person name="Fujita K."/>
            <person name="Isono K."/>
            <person name="Choi S."/>
            <person name="Ohtsubo E."/>
            <person name="Baba T."/>
            <person name="Wanner B.L."/>
            <person name="Mori H."/>
            <person name="Horiuchi T."/>
        </authorList>
    </citation>
    <scope>NUCLEOTIDE SEQUENCE [LARGE SCALE GENOMIC DNA]</scope>
    <source>
        <strain>K12 / W3110 / ATCC 27325 / DSM 5911</strain>
    </source>
</reference>
<reference key="5">
    <citation type="journal article" date="1986" name="Biochem. J.">
        <title>Structural and functional relationships between fumarase and aspartase. Nucleotide sequences of the fumarase (fumC) and aspartase (aspA) genes of Escherichia coli K12.</title>
        <authorList>
            <person name="Woods S.A."/>
            <person name="Miles J.S."/>
            <person name="Roberts R.E."/>
            <person name="Guest J.R."/>
        </authorList>
    </citation>
    <scope>NUCLEOTIDE SEQUENCE [GENOMIC DNA] OF 1-79</scope>
    <source>
        <strain>K12</strain>
    </source>
</reference>
<reference key="6">
    <citation type="journal article" date="1994" name="Nucleic Acids Res.">
        <title>Intrinsic and extrinsic approaches for detecting genes in a bacterial genome.</title>
        <authorList>
            <person name="Borodovsky M."/>
            <person name="Rudd K.E."/>
            <person name="Koonin E.V."/>
        </authorList>
    </citation>
    <scope>IDENTIFICATION</scope>
</reference>
<reference key="7">
    <citation type="journal article" date="1999" name="J. Mol. Biol.">
        <title>Increased synthesis of an Escherichia coli membrane protein suppresses F exclusion of bacteriophage T7.</title>
        <authorList>
            <person name="Wang W.-F."/>
            <person name="Margolin W."/>
            <person name="Molineux I.J."/>
        </authorList>
    </citation>
    <scope>CHARACTERIZATION</scope>
</reference>
<reference key="8">
    <citation type="journal article" date="2005" name="Science">
        <title>Global topology analysis of the Escherichia coli inner membrane proteome.</title>
        <authorList>
            <person name="Daley D.O."/>
            <person name="Rapp M."/>
            <person name="Granseth E."/>
            <person name="Melen K."/>
            <person name="Drew D."/>
            <person name="von Heijne G."/>
        </authorList>
    </citation>
    <scope>TOPOLOGY [LARGE SCALE ANALYSIS]</scope>
    <source>
        <strain>K12 / MG1655 / ATCC 47076</strain>
    </source>
</reference>
<protein>
    <recommendedName>
        <fullName>UPF0716 protein FxsA</fullName>
    </recommendedName>
    <alternativeName>
        <fullName>Suppressor of F exclusion of phage T7</fullName>
    </alternativeName>
</protein>
<dbReference type="EMBL" id="U78484">
    <property type="protein sequence ID" value="AAB36686.1"/>
    <property type="molecule type" value="Genomic_DNA"/>
</dbReference>
<dbReference type="EMBL" id="U14003">
    <property type="protein sequence ID" value="AAA97039.1"/>
    <property type="status" value="ALT_INIT"/>
    <property type="molecule type" value="Genomic_DNA"/>
</dbReference>
<dbReference type="EMBL" id="U00096">
    <property type="protein sequence ID" value="AAC77100.2"/>
    <property type="molecule type" value="Genomic_DNA"/>
</dbReference>
<dbReference type="EMBL" id="AP009048">
    <property type="protein sequence ID" value="BAE78142.1"/>
    <property type="molecule type" value="Genomic_DNA"/>
</dbReference>
<dbReference type="EMBL" id="X04066">
    <property type="protein sequence ID" value="CAA27700.1"/>
    <property type="status" value="ALT_INIT"/>
    <property type="molecule type" value="Genomic_DNA"/>
</dbReference>
<dbReference type="PIR" id="S56368">
    <property type="entry name" value="S56368"/>
</dbReference>
<dbReference type="RefSeq" id="NP_418564.2">
    <property type="nucleotide sequence ID" value="NC_000913.3"/>
</dbReference>
<dbReference type="RefSeq" id="WP_001267448.1">
    <property type="nucleotide sequence ID" value="NZ_STEB01000014.1"/>
</dbReference>
<dbReference type="BioGRID" id="4262196">
    <property type="interactions" value="16"/>
</dbReference>
<dbReference type="FunCoup" id="P37147">
    <property type="interactions" value="173"/>
</dbReference>
<dbReference type="IntAct" id="P37147">
    <property type="interactions" value="3"/>
</dbReference>
<dbReference type="STRING" id="511145.b4140"/>
<dbReference type="jPOST" id="P37147"/>
<dbReference type="PaxDb" id="511145-b4140"/>
<dbReference type="EnsemblBacteria" id="AAC77100">
    <property type="protein sequence ID" value="AAC77100"/>
    <property type="gene ID" value="b4140"/>
</dbReference>
<dbReference type="GeneID" id="948657"/>
<dbReference type="KEGG" id="ecj:JW4100"/>
<dbReference type="KEGG" id="eco:b4140"/>
<dbReference type="KEGG" id="ecoc:C3026_22375"/>
<dbReference type="PATRIC" id="fig|1411691.4.peg.2560"/>
<dbReference type="EchoBASE" id="EB2284"/>
<dbReference type="eggNOG" id="COG3030">
    <property type="taxonomic scope" value="Bacteria"/>
</dbReference>
<dbReference type="HOGENOM" id="CLU_085083_0_0_6"/>
<dbReference type="InParanoid" id="P37147"/>
<dbReference type="OMA" id="WLRGMSK"/>
<dbReference type="OrthoDB" id="9792788at2"/>
<dbReference type="PhylomeDB" id="P37147"/>
<dbReference type="BioCyc" id="EcoCyc:G7832-MONOMER"/>
<dbReference type="PRO" id="PR:P37147"/>
<dbReference type="Proteomes" id="UP000000625">
    <property type="component" value="Chromosome"/>
</dbReference>
<dbReference type="GO" id="GO:0016020">
    <property type="term" value="C:membrane"/>
    <property type="evidence" value="ECO:0000314"/>
    <property type="project" value="EcoCyc"/>
</dbReference>
<dbReference type="GO" id="GO:0005886">
    <property type="term" value="C:plasma membrane"/>
    <property type="evidence" value="ECO:0000314"/>
    <property type="project" value="EcoCyc"/>
</dbReference>
<dbReference type="InterPro" id="IPR007313">
    <property type="entry name" value="FxsA"/>
</dbReference>
<dbReference type="NCBIfam" id="NF008528">
    <property type="entry name" value="PRK11463.1-2"/>
    <property type="match status" value="1"/>
</dbReference>
<dbReference type="PANTHER" id="PTHR35335">
    <property type="entry name" value="UPF0716 PROTEIN FXSA"/>
    <property type="match status" value="1"/>
</dbReference>
<dbReference type="PANTHER" id="PTHR35335:SF1">
    <property type="entry name" value="UPF0716 PROTEIN FXSA"/>
    <property type="match status" value="1"/>
</dbReference>
<dbReference type="Pfam" id="PF04186">
    <property type="entry name" value="FxsA"/>
    <property type="match status" value="1"/>
</dbReference>
<accession>P37147</accession>
<accession>P76797</accession>
<accession>Q2M6G4</accession>
<keyword id="KW-0997">Cell inner membrane</keyword>
<keyword id="KW-1003">Cell membrane</keyword>
<keyword id="KW-0472">Membrane</keyword>
<keyword id="KW-1185">Reference proteome</keyword>
<keyword id="KW-0812">Transmembrane</keyword>
<keyword id="KW-1133">Transmembrane helix</keyword>
<comment type="function">
    <text>Overexpression alleviates the exclusion of phage T7 in cells harboring the F plasmid.</text>
</comment>
<comment type="subcellular location">
    <subcellularLocation>
        <location>Cell inner membrane</location>
        <topology>Multi-pass membrane protein</topology>
    </subcellularLocation>
</comment>
<comment type="similarity">
    <text evidence="3">Belongs to the UPF0716 (FxsA) family.</text>
</comment>
<comment type="sequence caution" evidence="3">
    <conflict type="erroneous initiation">
        <sequence resource="EMBL-CDS" id="AAA97039"/>
    </conflict>
    <text>Truncated N-terminus.</text>
</comment>
<comment type="sequence caution" evidence="3">
    <conflict type="erroneous initiation">
        <sequence resource="EMBL-CDS" id="CAA27700"/>
    </conflict>
    <text>Truncated N-terminus.</text>
</comment>
<organism>
    <name type="scientific">Escherichia coli (strain K12)</name>
    <dbReference type="NCBI Taxonomy" id="83333"/>
    <lineage>
        <taxon>Bacteria</taxon>
        <taxon>Pseudomonadati</taxon>
        <taxon>Pseudomonadota</taxon>
        <taxon>Gammaproteobacteria</taxon>
        <taxon>Enterobacterales</taxon>
        <taxon>Enterobacteriaceae</taxon>
        <taxon>Escherichia</taxon>
    </lineage>
</organism>
<evidence type="ECO:0000255" key="1"/>
<evidence type="ECO:0000256" key="2">
    <source>
        <dbReference type="SAM" id="MobiDB-lite"/>
    </source>
</evidence>
<evidence type="ECO:0000305" key="3"/>